<evidence type="ECO:0000250" key="1"/>
<evidence type="ECO:0000255" key="2">
    <source>
        <dbReference type="HAMAP-Rule" id="MF_00403"/>
    </source>
</evidence>
<evidence type="ECO:0000305" key="3"/>
<keyword id="KW-0488">Methylation</keyword>
<keyword id="KW-1185">Reference proteome</keyword>
<keyword id="KW-0687">Ribonucleoprotein</keyword>
<keyword id="KW-0689">Ribosomal protein</keyword>
<keyword id="KW-0694">RNA-binding</keyword>
<keyword id="KW-0699">rRNA-binding</keyword>
<keyword id="KW-0820">tRNA-binding</keyword>
<reference key="1">
    <citation type="submission" date="2006-03" db="EMBL/GenBank/DDBJ databases">
        <title>Complete sequence of chromosome of Nitrobacter hamburgensis X14.</title>
        <authorList>
            <consortium name="US DOE Joint Genome Institute"/>
            <person name="Copeland A."/>
            <person name="Lucas S."/>
            <person name="Lapidus A."/>
            <person name="Barry K."/>
            <person name="Detter J.C."/>
            <person name="Glavina del Rio T."/>
            <person name="Hammon N."/>
            <person name="Israni S."/>
            <person name="Dalin E."/>
            <person name="Tice H."/>
            <person name="Pitluck S."/>
            <person name="Chain P."/>
            <person name="Malfatti S."/>
            <person name="Shin M."/>
            <person name="Vergez L."/>
            <person name="Schmutz J."/>
            <person name="Larimer F."/>
            <person name="Land M."/>
            <person name="Hauser L."/>
            <person name="Kyrpides N."/>
            <person name="Ivanova N."/>
            <person name="Ward B."/>
            <person name="Arp D."/>
            <person name="Klotz M."/>
            <person name="Stein L."/>
            <person name="O'Mullan G."/>
            <person name="Starkenburg S."/>
            <person name="Sayavedra L."/>
            <person name="Poret-Peterson A.T."/>
            <person name="Gentry M.E."/>
            <person name="Bruce D."/>
            <person name="Richardson P."/>
        </authorList>
    </citation>
    <scope>NUCLEOTIDE SEQUENCE [LARGE SCALE GENOMIC DNA]</scope>
    <source>
        <strain>DSM 10229 / NCIMB 13809 / X14</strain>
    </source>
</reference>
<gene>
    <name evidence="2" type="primary">rpsL</name>
    <name type="ordered locus">Nham_1540</name>
</gene>
<proteinExistence type="inferred from homology"/>
<accession>Q1QN35</accession>
<comment type="function">
    <text evidence="2">With S4 and S5 plays an important role in translational accuracy.</text>
</comment>
<comment type="function">
    <text evidence="2">Interacts with and stabilizes bases of the 16S rRNA that are involved in tRNA selection in the A site and with the mRNA backbone. Located at the interface of the 30S and 50S subunits, it traverses the body of the 30S subunit contacting proteins on the other side and probably holding the rRNA structure together. The combined cluster of proteins S8, S12 and S17 appears to hold together the shoulder and platform of the 30S subunit.</text>
</comment>
<comment type="subunit">
    <text evidence="2">Part of the 30S ribosomal subunit. Contacts proteins S8 and S17. May interact with IF1 in the 30S initiation complex.</text>
</comment>
<comment type="similarity">
    <text evidence="2">Belongs to the universal ribosomal protein uS12 family.</text>
</comment>
<organism>
    <name type="scientific">Nitrobacter hamburgensis (strain DSM 10229 / NCIMB 13809 / X14)</name>
    <dbReference type="NCBI Taxonomy" id="323097"/>
    <lineage>
        <taxon>Bacteria</taxon>
        <taxon>Pseudomonadati</taxon>
        <taxon>Pseudomonadota</taxon>
        <taxon>Alphaproteobacteria</taxon>
        <taxon>Hyphomicrobiales</taxon>
        <taxon>Nitrobacteraceae</taxon>
        <taxon>Nitrobacter</taxon>
    </lineage>
</organism>
<name>RS12_NITHX</name>
<protein>
    <recommendedName>
        <fullName evidence="2">Small ribosomal subunit protein uS12</fullName>
    </recommendedName>
    <alternativeName>
        <fullName evidence="3">30S ribosomal protein S12</fullName>
    </alternativeName>
</protein>
<sequence length="123" mass="13862">MPTINQLIASPRVIQKSRKKVPALQQSPQKRGVCTRVYTTTPKKPNSALRKVAKVRLTNGFEVIGYIPGEGHNLQEHSVVMIRGGRVKDLPGVRYHILRGVLDTQGVKNRKQRRSKYGAKRPK</sequence>
<dbReference type="EMBL" id="CP000319">
    <property type="protein sequence ID" value="ABE62362.1"/>
    <property type="molecule type" value="Genomic_DNA"/>
</dbReference>
<dbReference type="RefSeq" id="WP_009797142.1">
    <property type="nucleotide sequence ID" value="NC_007964.1"/>
</dbReference>
<dbReference type="SMR" id="Q1QN35"/>
<dbReference type="STRING" id="323097.Nham_1540"/>
<dbReference type="KEGG" id="nha:Nham_1540"/>
<dbReference type="eggNOG" id="COG0048">
    <property type="taxonomic scope" value="Bacteria"/>
</dbReference>
<dbReference type="HOGENOM" id="CLU_104295_1_2_5"/>
<dbReference type="OrthoDB" id="9802366at2"/>
<dbReference type="Proteomes" id="UP000001953">
    <property type="component" value="Chromosome"/>
</dbReference>
<dbReference type="GO" id="GO:0015935">
    <property type="term" value="C:small ribosomal subunit"/>
    <property type="evidence" value="ECO:0007669"/>
    <property type="project" value="InterPro"/>
</dbReference>
<dbReference type="GO" id="GO:0019843">
    <property type="term" value="F:rRNA binding"/>
    <property type="evidence" value="ECO:0007669"/>
    <property type="project" value="UniProtKB-UniRule"/>
</dbReference>
<dbReference type="GO" id="GO:0003735">
    <property type="term" value="F:structural constituent of ribosome"/>
    <property type="evidence" value="ECO:0007669"/>
    <property type="project" value="InterPro"/>
</dbReference>
<dbReference type="GO" id="GO:0000049">
    <property type="term" value="F:tRNA binding"/>
    <property type="evidence" value="ECO:0007669"/>
    <property type="project" value="UniProtKB-UniRule"/>
</dbReference>
<dbReference type="GO" id="GO:0006412">
    <property type="term" value="P:translation"/>
    <property type="evidence" value="ECO:0007669"/>
    <property type="project" value="UniProtKB-UniRule"/>
</dbReference>
<dbReference type="CDD" id="cd03368">
    <property type="entry name" value="Ribosomal_S12"/>
    <property type="match status" value="1"/>
</dbReference>
<dbReference type="FunFam" id="2.40.50.140:FF:000001">
    <property type="entry name" value="30S ribosomal protein S12"/>
    <property type="match status" value="1"/>
</dbReference>
<dbReference type="Gene3D" id="2.40.50.140">
    <property type="entry name" value="Nucleic acid-binding proteins"/>
    <property type="match status" value="1"/>
</dbReference>
<dbReference type="HAMAP" id="MF_00403_B">
    <property type="entry name" value="Ribosomal_uS12_B"/>
    <property type="match status" value="1"/>
</dbReference>
<dbReference type="InterPro" id="IPR012340">
    <property type="entry name" value="NA-bd_OB-fold"/>
</dbReference>
<dbReference type="InterPro" id="IPR006032">
    <property type="entry name" value="Ribosomal_uS12"/>
</dbReference>
<dbReference type="InterPro" id="IPR005679">
    <property type="entry name" value="Ribosomal_uS12_bac"/>
</dbReference>
<dbReference type="NCBIfam" id="TIGR00981">
    <property type="entry name" value="rpsL_bact"/>
    <property type="match status" value="1"/>
</dbReference>
<dbReference type="PANTHER" id="PTHR11652">
    <property type="entry name" value="30S RIBOSOMAL PROTEIN S12 FAMILY MEMBER"/>
    <property type="match status" value="1"/>
</dbReference>
<dbReference type="Pfam" id="PF00164">
    <property type="entry name" value="Ribosom_S12_S23"/>
    <property type="match status" value="1"/>
</dbReference>
<dbReference type="PIRSF" id="PIRSF002133">
    <property type="entry name" value="Ribosomal_S12/S23"/>
    <property type="match status" value="1"/>
</dbReference>
<dbReference type="PRINTS" id="PR01034">
    <property type="entry name" value="RIBOSOMALS12"/>
</dbReference>
<dbReference type="SUPFAM" id="SSF50249">
    <property type="entry name" value="Nucleic acid-binding proteins"/>
    <property type="match status" value="1"/>
</dbReference>
<dbReference type="PROSITE" id="PS00055">
    <property type="entry name" value="RIBOSOMAL_S12"/>
    <property type="match status" value="1"/>
</dbReference>
<feature type="chain" id="PRO_0000263573" description="Small ribosomal subunit protein uS12">
    <location>
        <begin position="1"/>
        <end position="123"/>
    </location>
</feature>
<feature type="modified residue" description="3-methylthioaspartic acid" evidence="1">
    <location>
        <position position="89"/>
    </location>
</feature>